<geneLocation type="chloroplast"/>
<proteinExistence type="inferred from homology"/>
<name>RK2_LOBMA</name>
<accession>A4QLN5</accession>
<dbReference type="EMBL" id="AP009375">
    <property type="protein sequence ID" value="BAF50590.1"/>
    <property type="molecule type" value="Genomic_DNA"/>
</dbReference>
<dbReference type="EMBL" id="AP009375">
    <property type="protein sequence ID" value="BAF50617.1"/>
    <property type="molecule type" value="Genomic_DNA"/>
</dbReference>
<dbReference type="SMR" id="A4QLN5"/>
<dbReference type="GO" id="GO:0009507">
    <property type="term" value="C:chloroplast"/>
    <property type="evidence" value="ECO:0007669"/>
    <property type="project" value="UniProtKB-SubCell"/>
</dbReference>
<dbReference type="GO" id="GO:0005762">
    <property type="term" value="C:mitochondrial large ribosomal subunit"/>
    <property type="evidence" value="ECO:0007669"/>
    <property type="project" value="TreeGrafter"/>
</dbReference>
<dbReference type="GO" id="GO:0019843">
    <property type="term" value="F:rRNA binding"/>
    <property type="evidence" value="ECO:0007669"/>
    <property type="project" value="UniProtKB-UniRule"/>
</dbReference>
<dbReference type="GO" id="GO:0003735">
    <property type="term" value="F:structural constituent of ribosome"/>
    <property type="evidence" value="ECO:0007669"/>
    <property type="project" value="InterPro"/>
</dbReference>
<dbReference type="GO" id="GO:0016740">
    <property type="term" value="F:transferase activity"/>
    <property type="evidence" value="ECO:0007669"/>
    <property type="project" value="InterPro"/>
</dbReference>
<dbReference type="GO" id="GO:0032543">
    <property type="term" value="P:mitochondrial translation"/>
    <property type="evidence" value="ECO:0007669"/>
    <property type="project" value="TreeGrafter"/>
</dbReference>
<dbReference type="FunFam" id="4.10.950.10:FF:000001">
    <property type="entry name" value="50S ribosomal protein L2"/>
    <property type="match status" value="1"/>
</dbReference>
<dbReference type="FunFam" id="2.30.30.30:FF:000008">
    <property type="entry name" value="50S ribosomal protein L2, chloroplastic"/>
    <property type="match status" value="1"/>
</dbReference>
<dbReference type="FunFam" id="2.40.50.140:FF:000029">
    <property type="entry name" value="50S ribosomal protein L2, chloroplastic"/>
    <property type="match status" value="1"/>
</dbReference>
<dbReference type="Gene3D" id="2.30.30.30">
    <property type="match status" value="1"/>
</dbReference>
<dbReference type="Gene3D" id="2.40.50.140">
    <property type="entry name" value="Nucleic acid-binding proteins"/>
    <property type="match status" value="1"/>
</dbReference>
<dbReference type="Gene3D" id="4.10.950.10">
    <property type="entry name" value="Ribosomal protein L2, domain 3"/>
    <property type="match status" value="1"/>
</dbReference>
<dbReference type="HAMAP" id="MF_01320_B">
    <property type="entry name" value="Ribosomal_uL2_B"/>
    <property type="match status" value="1"/>
</dbReference>
<dbReference type="InterPro" id="IPR012340">
    <property type="entry name" value="NA-bd_OB-fold"/>
</dbReference>
<dbReference type="InterPro" id="IPR014722">
    <property type="entry name" value="Rib_uL2_dom2"/>
</dbReference>
<dbReference type="InterPro" id="IPR002171">
    <property type="entry name" value="Ribosomal_uL2"/>
</dbReference>
<dbReference type="InterPro" id="IPR005880">
    <property type="entry name" value="Ribosomal_uL2_bac/org-type"/>
</dbReference>
<dbReference type="InterPro" id="IPR022669">
    <property type="entry name" value="Ribosomal_uL2_C"/>
</dbReference>
<dbReference type="InterPro" id="IPR022671">
    <property type="entry name" value="Ribosomal_uL2_CS"/>
</dbReference>
<dbReference type="InterPro" id="IPR014726">
    <property type="entry name" value="Ribosomal_uL2_dom3"/>
</dbReference>
<dbReference type="InterPro" id="IPR022666">
    <property type="entry name" value="Ribosomal_uL2_RNA-bd_dom"/>
</dbReference>
<dbReference type="InterPro" id="IPR008991">
    <property type="entry name" value="Translation_prot_SH3-like_sf"/>
</dbReference>
<dbReference type="NCBIfam" id="TIGR01171">
    <property type="entry name" value="rplB_bact"/>
    <property type="match status" value="1"/>
</dbReference>
<dbReference type="PANTHER" id="PTHR13691:SF5">
    <property type="entry name" value="LARGE RIBOSOMAL SUBUNIT PROTEIN UL2M"/>
    <property type="match status" value="1"/>
</dbReference>
<dbReference type="PANTHER" id="PTHR13691">
    <property type="entry name" value="RIBOSOMAL PROTEIN L2"/>
    <property type="match status" value="1"/>
</dbReference>
<dbReference type="Pfam" id="PF00181">
    <property type="entry name" value="Ribosomal_L2"/>
    <property type="match status" value="1"/>
</dbReference>
<dbReference type="Pfam" id="PF03947">
    <property type="entry name" value="Ribosomal_L2_C"/>
    <property type="match status" value="1"/>
</dbReference>
<dbReference type="PIRSF" id="PIRSF002158">
    <property type="entry name" value="Ribosomal_L2"/>
    <property type="match status" value="1"/>
</dbReference>
<dbReference type="SMART" id="SM01383">
    <property type="entry name" value="Ribosomal_L2"/>
    <property type="match status" value="1"/>
</dbReference>
<dbReference type="SMART" id="SM01382">
    <property type="entry name" value="Ribosomal_L2_C"/>
    <property type="match status" value="1"/>
</dbReference>
<dbReference type="SUPFAM" id="SSF50249">
    <property type="entry name" value="Nucleic acid-binding proteins"/>
    <property type="match status" value="1"/>
</dbReference>
<dbReference type="SUPFAM" id="SSF50104">
    <property type="entry name" value="Translation proteins SH3-like domain"/>
    <property type="match status" value="1"/>
</dbReference>
<dbReference type="PROSITE" id="PS00467">
    <property type="entry name" value="RIBOSOMAL_L2"/>
    <property type="match status" value="1"/>
</dbReference>
<sequence length="274" mass="29902">MAINLYKTSTPSTRNGAVDSQVKSNPRNNLIYGQHHCGKGRNARGIITVRHRGGGHKRLYRKIDFRRNAKDIYGRIVTIEYDPNRNAYICLIHYGDGEKRYILHPRGAIIGDTIVSGTEVPIKMGNALPLTDMPLGTAIHNIEITLGKGGQLARAAGAVAKLIAKEGKSATLKLPSGEVRLISKNCSATVGQVGNVGVNQKSLGRAGSKCWLGKRPVVRGVVMNPVDHPHGGGEGRAPIGRKKPVTPWGYPALGRRTRKRKKYSETLILRRRSK</sequence>
<evidence type="ECO:0000250" key="1"/>
<evidence type="ECO:0000255" key="2">
    <source>
        <dbReference type="HAMAP-Rule" id="MF_01320"/>
    </source>
</evidence>
<evidence type="ECO:0000256" key="3">
    <source>
        <dbReference type="SAM" id="MobiDB-lite"/>
    </source>
</evidence>
<evidence type="ECO:0000305" key="4"/>
<gene>
    <name type="primary">rpl2-A</name>
</gene>
<gene>
    <name type="primary">rpl2-B</name>
</gene>
<comment type="subunit">
    <text evidence="1">Part of the 50S ribosomal subunit.</text>
</comment>
<comment type="subcellular location">
    <subcellularLocation>
        <location>Plastid</location>
        <location>Chloroplast</location>
    </subcellularLocation>
</comment>
<comment type="similarity">
    <text evidence="4">Belongs to the universal ribosomal protein uL2 family.</text>
</comment>
<feature type="chain" id="PRO_0000310080" description="Large ribosomal subunit protein uL2cz/uL2cy">
    <location>
        <begin position="1"/>
        <end position="274"/>
    </location>
</feature>
<feature type="region of interest" description="Disordered" evidence="3">
    <location>
        <begin position="1"/>
        <end position="22"/>
    </location>
</feature>
<feature type="region of interest" description="Disordered" evidence="3">
    <location>
        <begin position="225"/>
        <end position="274"/>
    </location>
</feature>
<feature type="compositionally biased region" description="Polar residues" evidence="3">
    <location>
        <begin position="1"/>
        <end position="15"/>
    </location>
</feature>
<reference key="1">
    <citation type="submission" date="2007-03" db="EMBL/GenBank/DDBJ databases">
        <title>Sequencing analysis of Lobularia maritima chloroplast DNA.</title>
        <authorList>
            <person name="Hosouchi T."/>
            <person name="Tsuruoka H."/>
            <person name="Kotani H."/>
        </authorList>
    </citation>
    <scope>NUCLEOTIDE SEQUENCE [LARGE SCALE GENOMIC DNA]</scope>
</reference>
<organism>
    <name type="scientific">Lobularia maritima</name>
    <name type="common">Sweet alyssum</name>
    <name type="synonym">Alyssum maritimum</name>
    <dbReference type="NCBI Taxonomy" id="226051"/>
    <lineage>
        <taxon>Eukaryota</taxon>
        <taxon>Viridiplantae</taxon>
        <taxon>Streptophyta</taxon>
        <taxon>Embryophyta</taxon>
        <taxon>Tracheophyta</taxon>
        <taxon>Spermatophyta</taxon>
        <taxon>Magnoliopsida</taxon>
        <taxon>eudicotyledons</taxon>
        <taxon>Gunneridae</taxon>
        <taxon>Pentapetalae</taxon>
        <taxon>rosids</taxon>
        <taxon>malvids</taxon>
        <taxon>Brassicales</taxon>
        <taxon>Brassicaceae</taxon>
        <taxon>Anastaticeae</taxon>
        <taxon>Lobularia</taxon>
    </lineage>
</organism>
<protein>
    <recommendedName>
        <fullName evidence="2">Large ribosomal subunit protein uL2cz/uL2cy</fullName>
    </recommendedName>
    <alternativeName>
        <fullName evidence="4">50S ribosomal protein L2, chloroplastic</fullName>
    </alternativeName>
</protein>
<keyword id="KW-0150">Chloroplast</keyword>
<keyword id="KW-0934">Plastid</keyword>
<keyword id="KW-0687">Ribonucleoprotein</keyword>
<keyword id="KW-0689">Ribosomal protein</keyword>